<proteinExistence type="inferred from homology"/>
<sequence length="386" mass="42398">MPHTITTTDELAAYCARAATQPYVTVDTEFLRERTYFAQLCLVQVAMPGTDDTDAVLIDPLAEGLSLEPLYELFRNVNVVKVFHAARQDLEIFFVEGGLVPTPLFDTQVAAMVCGFGDQVGYETLVRRIAKANLDKSSRFTDWSRRPLSDAQKVYALADVTYLREIYEYLSAELARTDRTHWLEEELAQLTNADAYVVDPENAWKRLKLRSNSGRVVAIAQQLAAFRETYAQEKNVPRNRVLKDDALLELAGTKPKTVADLGKSRLLLRDARKGAIAEGLVAAVARGMSVPNSEIPKVQAGRDRSNLNPALADLLRVLLKAKAENAGVATKLIASSSDLDDIASGFTDGVWASGWRSEVFGADALRLLNGEVALAAKGQKVKIVEV</sequence>
<name>RND_JANSC</name>
<keyword id="KW-0963">Cytoplasm</keyword>
<keyword id="KW-0269">Exonuclease</keyword>
<keyword id="KW-0378">Hydrolase</keyword>
<keyword id="KW-0540">Nuclease</keyword>
<keyword id="KW-1185">Reference proteome</keyword>
<keyword id="KW-0819">tRNA processing</keyword>
<protein>
    <recommendedName>
        <fullName evidence="1">Ribonuclease D</fullName>
        <shortName evidence="1">RNase D</shortName>
        <ecNumber evidence="1">3.1.13.5</ecNumber>
    </recommendedName>
</protein>
<accession>Q28RA7</accession>
<comment type="function">
    <text evidence="1">Exonuclease involved in the 3' processing of various precursor tRNAs. Initiates hydrolysis at the 3'-terminus of an RNA molecule and releases 5'-mononucleotides.</text>
</comment>
<comment type="catalytic activity">
    <reaction evidence="1">
        <text>Exonucleolytic cleavage that removes extra residues from the 3'-terminus of tRNA to produce 5'-mononucleotides.</text>
        <dbReference type="EC" id="3.1.13.5"/>
    </reaction>
</comment>
<comment type="cofactor">
    <cofactor evidence="1">
        <name>a divalent metal cation</name>
        <dbReference type="ChEBI" id="CHEBI:60240"/>
    </cofactor>
</comment>
<comment type="subcellular location">
    <subcellularLocation>
        <location evidence="1">Cytoplasm</location>
    </subcellularLocation>
</comment>
<comment type="similarity">
    <text evidence="1">Belongs to the RNase D family.</text>
</comment>
<feature type="chain" id="PRO_0000411065" description="Ribonuclease D">
    <location>
        <begin position="1"/>
        <end position="386"/>
    </location>
</feature>
<feature type="domain" description="3'-5' exonuclease" evidence="1">
    <location>
        <begin position="3"/>
        <end position="174"/>
    </location>
</feature>
<feature type="domain" description="HRDC" evidence="1">
    <location>
        <begin position="213"/>
        <end position="294"/>
    </location>
</feature>
<reference key="1">
    <citation type="submission" date="2006-02" db="EMBL/GenBank/DDBJ databases">
        <title>Complete sequence of chromosome of Jannaschia sp. CCS1.</title>
        <authorList>
            <consortium name="US DOE Joint Genome Institute"/>
            <person name="Copeland A."/>
            <person name="Lucas S."/>
            <person name="Lapidus A."/>
            <person name="Barry K."/>
            <person name="Detter J.C."/>
            <person name="Glavina del Rio T."/>
            <person name="Hammon N."/>
            <person name="Israni S."/>
            <person name="Pitluck S."/>
            <person name="Brettin T."/>
            <person name="Bruce D."/>
            <person name="Han C."/>
            <person name="Tapia R."/>
            <person name="Gilna P."/>
            <person name="Chertkov O."/>
            <person name="Saunders E."/>
            <person name="Schmutz J."/>
            <person name="Larimer F."/>
            <person name="Land M."/>
            <person name="Kyrpides N."/>
            <person name="Lykidis A."/>
            <person name="Moran M.A."/>
            <person name="Belas R."/>
            <person name="Ye W."/>
            <person name="Buchan A."/>
            <person name="Gonzalez J.M."/>
            <person name="Schell M.A."/>
            <person name="Richardson P."/>
        </authorList>
    </citation>
    <scope>NUCLEOTIDE SEQUENCE [LARGE SCALE GENOMIC DNA]</scope>
    <source>
        <strain>CCS1</strain>
    </source>
</reference>
<dbReference type="EC" id="3.1.13.5" evidence="1"/>
<dbReference type="EMBL" id="CP000264">
    <property type="protein sequence ID" value="ABD54755.1"/>
    <property type="molecule type" value="Genomic_DNA"/>
</dbReference>
<dbReference type="RefSeq" id="WP_011454960.1">
    <property type="nucleotide sequence ID" value="NC_007802.1"/>
</dbReference>
<dbReference type="SMR" id="Q28RA7"/>
<dbReference type="STRING" id="290400.Jann_1838"/>
<dbReference type="KEGG" id="jan:Jann_1838"/>
<dbReference type="eggNOG" id="COG0349">
    <property type="taxonomic scope" value="Bacteria"/>
</dbReference>
<dbReference type="HOGENOM" id="CLU_042387_0_0_5"/>
<dbReference type="OrthoDB" id="9800549at2"/>
<dbReference type="Proteomes" id="UP000008326">
    <property type="component" value="Chromosome"/>
</dbReference>
<dbReference type="GO" id="GO:0005737">
    <property type="term" value="C:cytoplasm"/>
    <property type="evidence" value="ECO:0007669"/>
    <property type="project" value="UniProtKB-SubCell"/>
</dbReference>
<dbReference type="GO" id="GO:0008408">
    <property type="term" value="F:3'-5' exonuclease activity"/>
    <property type="evidence" value="ECO:0007669"/>
    <property type="project" value="InterPro"/>
</dbReference>
<dbReference type="GO" id="GO:0003676">
    <property type="term" value="F:nucleic acid binding"/>
    <property type="evidence" value="ECO:0007669"/>
    <property type="project" value="InterPro"/>
</dbReference>
<dbReference type="GO" id="GO:0000166">
    <property type="term" value="F:nucleotide binding"/>
    <property type="evidence" value="ECO:0007669"/>
    <property type="project" value="InterPro"/>
</dbReference>
<dbReference type="GO" id="GO:0033890">
    <property type="term" value="F:ribonuclease D activity"/>
    <property type="evidence" value="ECO:0007669"/>
    <property type="project" value="UniProtKB-UniRule"/>
</dbReference>
<dbReference type="GO" id="GO:0042780">
    <property type="term" value="P:tRNA 3'-end processing"/>
    <property type="evidence" value="ECO:0007669"/>
    <property type="project" value="UniProtKB-UniRule"/>
</dbReference>
<dbReference type="CDD" id="cd06142">
    <property type="entry name" value="RNaseD_exo"/>
    <property type="match status" value="1"/>
</dbReference>
<dbReference type="Gene3D" id="1.10.150.80">
    <property type="entry name" value="HRDC domain"/>
    <property type="match status" value="1"/>
</dbReference>
<dbReference type="Gene3D" id="3.30.420.10">
    <property type="entry name" value="Ribonuclease H-like superfamily/Ribonuclease H"/>
    <property type="match status" value="1"/>
</dbReference>
<dbReference type="HAMAP" id="MF_01899">
    <property type="entry name" value="RNase_D"/>
    <property type="match status" value="1"/>
</dbReference>
<dbReference type="InterPro" id="IPR002562">
    <property type="entry name" value="3'-5'_exonuclease_dom"/>
</dbReference>
<dbReference type="InterPro" id="IPR010997">
    <property type="entry name" value="HRDC-like_sf"/>
</dbReference>
<dbReference type="InterPro" id="IPR002121">
    <property type="entry name" value="HRDC_dom"/>
</dbReference>
<dbReference type="InterPro" id="IPR044876">
    <property type="entry name" value="HRDC_dom_sf"/>
</dbReference>
<dbReference type="InterPro" id="IPR006292">
    <property type="entry name" value="RNase_D"/>
</dbReference>
<dbReference type="InterPro" id="IPR051086">
    <property type="entry name" value="RNase_D-like"/>
</dbReference>
<dbReference type="InterPro" id="IPR012337">
    <property type="entry name" value="RNaseH-like_sf"/>
</dbReference>
<dbReference type="InterPro" id="IPR036397">
    <property type="entry name" value="RNaseH_sf"/>
</dbReference>
<dbReference type="NCBIfam" id="TIGR01388">
    <property type="entry name" value="rnd"/>
    <property type="match status" value="1"/>
</dbReference>
<dbReference type="PANTHER" id="PTHR47649">
    <property type="entry name" value="RIBONUCLEASE D"/>
    <property type="match status" value="1"/>
</dbReference>
<dbReference type="PANTHER" id="PTHR47649:SF1">
    <property type="entry name" value="RIBONUCLEASE D"/>
    <property type="match status" value="1"/>
</dbReference>
<dbReference type="Pfam" id="PF01612">
    <property type="entry name" value="DNA_pol_A_exo1"/>
    <property type="match status" value="1"/>
</dbReference>
<dbReference type="Pfam" id="PF00570">
    <property type="entry name" value="HRDC"/>
    <property type="match status" value="1"/>
</dbReference>
<dbReference type="SMART" id="SM00474">
    <property type="entry name" value="35EXOc"/>
    <property type="match status" value="1"/>
</dbReference>
<dbReference type="SUPFAM" id="SSF47819">
    <property type="entry name" value="HRDC-like"/>
    <property type="match status" value="2"/>
</dbReference>
<dbReference type="SUPFAM" id="SSF53098">
    <property type="entry name" value="Ribonuclease H-like"/>
    <property type="match status" value="1"/>
</dbReference>
<dbReference type="PROSITE" id="PS50967">
    <property type="entry name" value="HRDC"/>
    <property type="match status" value="1"/>
</dbReference>
<evidence type="ECO:0000255" key="1">
    <source>
        <dbReference type="HAMAP-Rule" id="MF_01899"/>
    </source>
</evidence>
<gene>
    <name evidence="1" type="primary">rnd</name>
    <name type="ordered locus">Jann_1838</name>
</gene>
<organism>
    <name type="scientific">Jannaschia sp. (strain CCS1)</name>
    <dbReference type="NCBI Taxonomy" id="290400"/>
    <lineage>
        <taxon>Bacteria</taxon>
        <taxon>Pseudomonadati</taxon>
        <taxon>Pseudomonadota</taxon>
        <taxon>Alphaproteobacteria</taxon>
        <taxon>Rhodobacterales</taxon>
        <taxon>Roseobacteraceae</taxon>
        <taxon>Jannaschia</taxon>
    </lineage>
</organism>